<organism>
    <name type="scientific">Arabidopsis thaliana</name>
    <name type="common">Mouse-ear cress</name>
    <dbReference type="NCBI Taxonomy" id="3702"/>
    <lineage>
        <taxon>Eukaryota</taxon>
        <taxon>Viridiplantae</taxon>
        <taxon>Streptophyta</taxon>
        <taxon>Embryophyta</taxon>
        <taxon>Tracheophyta</taxon>
        <taxon>Spermatophyta</taxon>
        <taxon>Magnoliopsida</taxon>
        <taxon>eudicotyledons</taxon>
        <taxon>Gunneridae</taxon>
        <taxon>Pentapetalae</taxon>
        <taxon>rosids</taxon>
        <taxon>malvids</taxon>
        <taxon>Brassicales</taxon>
        <taxon>Brassicaceae</taxon>
        <taxon>Camelineae</taxon>
        <taxon>Arabidopsis</taxon>
    </lineage>
</organism>
<comment type="function">
    <text evidence="1">Probable transcriptional regulator.</text>
</comment>
<comment type="subcellular location">
    <subcellularLocation>
        <location evidence="1">Nucleus</location>
    </subcellularLocation>
</comment>
<comment type="domain">
    <text evidence="1">The methyl-CpG-binding domain (MBD) functions both in binding to methylated DNA and in protein interactions.</text>
</comment>
<sequence>MCVVKTTLIDSYAAQCWKCLKVRSIESQEDYEEIRSKTLEKFFECKRCEEPGDMVMNFDSLTMRWFQDEHSIPKTPQGLKRVLVVRTNCVKVDVYYESLAPRRKRFKSIKEVATFIEDKEEFKDMTLEEVSFAAPKRLKLKKKPVDSHSSSRNTEEDGVSRDA</sequence>
<dbReference type="EMBL" id="AF013293">
    <property type="status" value="NOT_ANNOTATED_CDS"/>
    <property type="molecule type" value="Genomic_DNA"/>
</dbReference>
<dbReference type="EMBL" id="AF195115">
    <property type="status" value="NOT_ANNOTATED_CDS"/>
    <property type="molecule type" value="Genomic_DNA"/>
</dbReference>
<dbReference type="EMBL" id="AL161471">
    <property type="status" value="NOT_ANNOTATED_CDS"/>
    <property type="molecule type" value="Genomic_DNA"/>
</dbReference>
<dbReference type="EMBL" id="CP002687">
    <property type="protein sequence ID" value="AEE81874.1"/>
    <property type="molecule type" value="Genomic_DNA"/>
</dbReference>
<dbReference type="EMBL" id="DQ056635">
    <property type="protein sequence ID" value="AAY78783.1"/>
    <property type="molecule type" value="mRNA"/>
</dbReference>
<dbReference type="RefSeq" id="NP_567177.1">
    <property type="nucleotide sequence ID" value="NM_116266.1"/>
</dbReference>
<dbReference type="BioGRID" id="13360">
    <property type="interactions" value="5"/>
</dbReference>
<dbReference type="IntAct" id="Q4PSK1">
    <property type="interactions" value="5"/>
</dbReference>
<dbReference type="STRING" id="3702.Q4PSK1"/>
<dbReference type="PaxDb" id="3702-AT4G00416.1"/>
<dbReference type="EnsemblPlants" id="AT4G00416.1">
    <property type="protein sequence ID" value="AT4G00416.1"/>
    <property type="gene ID" value="AT4G00416"/>
</dbReference>
<dbReference type="GeneID" id="828069"/>
<dbReference type="Gramene" id="AT4G00416.1">
    <property type="protein sequence ID" value="AT4G00416.1"/>
    <property type="gene ID" value="AT4G00416"/>
</dbReference>
<dbReference type="KEGG" id="ath:AT4G00416"/>
<dbReference type="Araport" id="AT4G00416"/>
<dbReference type="TAIR" id="AT4G00416">
    <property type="gene designation" value="MBD3"/>
</dbReference>
<dbReference type="eggNOG" id="KOG4161">
    <property type="taxonomic scope" value="Eukaryota"/>
</dbReference>
<dbReference type="HOGENOM" id="CLU_109577_1_0_1"/>
<dbReference type="InParanoid" id="Q4PSK1"/>
<dbReference type="OMA" id="SYAAQCW"/>
<dbReference type="PhylomeDB" id="Q4PSK1"/>
<dbReference type="PRO" id="PR:Q4PSK1"/>
<dbReference type="Proteomes" id="UP000006548">
    <property type="component" value="Chromosome 4"/>
</dbReference>
<dbReference type="ExpressionAtlas" id="Q4PSK1">
    <property type="expression patterns" value="baseline and differential"/>
</dbReference>
<dbReference type="GO" id="GO:0005634">
    <property type="term" value="C:nucleus"/>
    <property type="evidence" value="ECO:0000250"/>
    <property type="project" value="UniProtKB"/>
</dbReference>
<dbReference type="GO" id="GO:0016581">
    <property type="term" value="C:NuRD complex"/>
    <property type="evidence" value="ECO:0000250"/>
    <property type="project" value="UniProtKB"/>
</dbReference>
<dbReference type="GO" id="GO:0008327">
    <property type="term" value="F:methyl-CpG binding"/>
    <property type="evidence" value="ECO:0000250"/>
    <property type="project" value="TAIR"/>
</dbReference>
<dbReference type="GO" id="GO:0008270">
    <property type="term" value="F:zinc ion binding"/>
    <property type="evidence" value="ECO:0007669"/>
    <property type="project" value="UniProtKB-KW"/>
</dbReference>
<dbReference type="GO" id="GO:0006338">
    <property type="term" value="P:chromatin remodeling"/>
    <property type="evidence" value="ECO:0000250"/>
    <property type="project" value="UniProtKB"/>
</dbReference>
<dbReference type="CDD" id="cd01396">
    <property type="entry name" value="MeCP2_MBD"/>
    <property type="match status" value="1"/>
</dbReference>
<dbReference type="Gene3D" id="3.30.890.10">
    <property type="entry name" value="Methyl-cpg-binding Protein 2, Chain A"/>
    <property type="match status" value="1"/>
</dbReference>
<dbReference type="InterPro" id="IPR016177">
    <property type="entry name" value="DNA-bd_dom_sf"/>
</dbReference>
<dbReference type="InterPro" id="IPR001739">
    <property type="entry name" value="Methyl_CpG_DNA-bd"/>
</dbReference>
<dbReference type="PANTHER" id="PTHR12396">
    <property type="entry name" value="METHYL-CPG BINDING PROTEIN, MBD"/>
    <property type="match status" value="1"/>
</dbReference>
<dbReference type="PANTHER" id="PTHR12396:SF10">
    <property type="entry name" value="METHYL-CPG-BINDING DOMAIN-CONTAINING PROTEIN 1-RELATED"/>
    <property type="match status" value="1"/>
</dbReference>
<dbReference type="Pfam" id="PF01429">
    <property type="entry name" value="MBD"/>
    <property type="match status" value="1"/>
</dbReference>
<dbReference type="SUPFAM" id="SSF54171">
    <property type="entry name" value="DNA-binding domain"/>
    <property type="match status" value="1"/>
</dbReference>
<dbReference type="PROSITE" id="PS50982">
    <property type="entry name" value="MBD"/>
    <property type="match status" value="1"/>
</dbReference>
<proteinExistence type="evidence at transcript level"/>
<gene>
    <name type="primary">MBD3</name>
    <name type="ordered locus">At4g00416</name>
    <name type="ORF">A_IG005I10</name>
    <name type="ORF">F5I10</name>
</gene>
<accession>Q4PSK1</accession>
<reference key="1">
    <citation type="journal article" date="1999" name="Nature">
        <title>Sequence and analysis of chromosome 4 of the plant Arabidopsis thaliana.</title>
        <authorList>
            <person name="Mayer K.F.X."/>
            <person name="Schueller C."/>
            <person name="Wambutt R."/>
            <person name="Murphy G."/>
            <person name="Volckaert G."/>
            <person name="Pohl T."/>
            <person name="Duesterhoeft A."/>
            <person name="Stiekema W."/>
            <person name="Entian K.-D."/>
            <person name="Terryn N."/>
            <person name="Harris B."/>
            <person name="Ansorge W."/>
            <person name="Brandt P."/>
            <person name="Grivell L.A."/>
            <person name="Rieger M."/>
            <person name="Weichselgartner M."/>
            <person name="de Simone V."/>
            <person name="Obermaier B."/>
            <person name="Mache R."/>
            <person name="Mueller M."/>
            <person name="Kreis M."/>
            <person name="Delseny M."/>
            <person name="Puigdomenech P."/>
            <person name="Watson M."/>
            <person name="Schmidtheini T."/>
            <person name="Reichert B."/>
            <person name="Portetelle D."/>
            <person name="Perez-Alonso M."/>
            <person name="Boutry M."/>
            <person name="Bancroft I."/>
            <person name="Vos P."/>
            <person name="Hoheisel J."/>
            <person name="Zimmermann W."/>
            <person name="Wedler H."/>
            <person name="Ridley P."/>
            <person name="Langham S.-A."/>
            <person name="McCullagh B."/>
            <person name="Bilham L."/>
            <person name="Robben J."/>
            <person name="van der Schueren J."/>
            <person name="Grymonprez B."/>
            <person name="Chuang Y.-J."/>
            <person name="Vandenbussche F."/>
            <person name="Braeken M."/>
            <person name="Weltjens I."/>
            <person name="Voet M."/>
            <person name="Bastiaens I."/>
            <person name="Aert R."/>
            <person name="Defoor E."/>
            <person name="Weitzenegger T."/>
            <person name="Bothe G."/>
            <person name="Ramsperger U."/>
            <person name="Hilbert H."/>
            <person name="Braun M."/>
            <person name="Holzer E."/>
            <person name="Brandt A."/>
            <person name="Peters S."/>
            <person name="van Staveren M."/>
            <person name="Dirkse W."/>
            <person name="Mooijman P."/>
            <person name="Klein Lankhorst R."/>
            <person name="Rose M."/>
            <person name="Hauf J."/>
            <person name="Koetter P."/>
            <person name="Berneiser S."/>
            <person name="Hempel S."/>
            <person name="Feldpausch M."/>
            <person name="Lamberth S."/>
            <person name="Van den Daele H."/>
            <person name="De Keyser A."/>
            <person name="Buysshaert C."/>
            <person name="Gielen J."/>
            <person name="Villarroel R."/>
            <person name="De Clercq R."/>
            <person name="van Montagu M."/>
            <person name="Rogers J."/>
            <person name="Cronin A."/>
            <person name="Quail M.A."/>
            <person name="Bray-Allen S."/>
            <person name="Clark L."/>
            <person name="Doggett J."/>
            <person name="Hall S."/>
            <person name="Kay M."/>
            <person name="Lennard N."/>
            <person name="McLay K."/>
            <person name="Mayes R."/>
            <person name="Pettett A."/>
            <person name="Rajandream M.A."/>
            <person name="Lyne M."/>
            <person name="Benes V."/>
            <person name="Rechmann S."/>
            <person name="Borkova D."/>
            <person name="Bloecker H."/>
            <person name="Scharfe M."/>
            <person name="Grimm M."/>
            <person name="Loehnert T.-H."/>
            <person name="Dose S."/>
            <person name="de Haan M."/>
            <person name="Maarse A.C."/>
            <person name="Schaefer M."/>
            <person name="Mueller-Auer S."/>
            <person name="Gabel C."/>
            <person name="Fuchs M."/>
            <person name="Fartmann B."/>
            <person name="Granderath K."/>
            <person name="Dauner D."/>
            <person name="Herzl A."/>
            <person name="Neumann S."/>
            <person name="Argiriou A."/>
            <person name="Vitale D."/>
            <person name="Liguori R."/>
            <person name="Piravandi E."/>
            <person name="Massenet O."/>
            <person name="Quigley F."/>
            <person name="Clabauld G."/>
            <person name="Muendlein A."/>
            <person name="Felber R."/>
            <person name="Schnabl S."/>
            <person name="Hiller R."/>
            <person name="Schmidt W."/>
            <person name="Lecharny A."/>
            <person name="Aubourg S."/>
            <person name="Chefdor F."/>
            <person name="Cooke R."/>
            <person name="Berger C."/>
            <person name="Monfort A."/>
            <person name="Casacuberta E."/>
            <person name="Gibbons T."/>
            <person name="Weber N."/>
            <person name="Vandenbol M."/>
            <person name="Bargues M."/>
            <person name="Terol J."/>
            <person name="Torres A."/>
            <person name="Perez-Perez A."/>
            <person name="Purnelle B."/>
            <person name="Bent E."/>
            <person name="Johnson S."/>
            <person name="Tacon D."/>
            <person name="Jesse T."/>
            <person name="Heijnen L."/>
            <person name="Schwarz S."/>
            <person name="Scholler P."/>
            <person name="Heber S."/>
            <person name="Francs P."/>
            <person name="Bielke C."/>
            <person name="Frishman D."/>
            <person name="Haase D."/>
            <person name="Lemcke K."/>
            <person name="Mewes H.-W."/>
            <person name="Stocker S."/>
            <person name="Zaccaria P."/>
            <person name="Bevan M."/>
            <person name="Wilson R.K."/>
            <person name="de la Bastide M."/>
            <person name="Habermann K."/>
            <person name="Parnell L."/>
            <person name="Dedhia N."/>
            <person name="Gnoj L."/>
            <person name="Schutz K."/>
            <person name="Huang E."/>
            <person name="Spiegel L."/>
            <person name="Sekhon M."/>
            <person name="Murray J."/>
            <person name="Sheet P."/>
            <person name="Cordes M."/>
            <person name="Abu-Threideh J."/>
            <person name="Stoneking T."/>
            <person name="Kalicki J."/>
            <person name="Graves T."/>
            <person name="Harmon G."/>
            <person name="Edwards J."/>
            <person name="Latreille P."/>
            <person name="Courtney L."/>
            <person name="Cloud J."/>
            <person name="Abbott A."/>
            <person name="Scott K."/>
            <person name="Johnson D."/>
            <person name="Minx P."/>
            <person name="Bentley D."/>
            <person name="Fulton B."/>
            <person name="Miller N."/>
            <person name="Greco T."/>
            <person name="Kemp K."/>
            <person name="Kramer J."/>
            <person name="Fulton L."/>
            <person name="Mardis E."/>
            <person name="Dante M."/>
            <person name="Pepin K."/>
            <person name="Hillier L.W."/>
            <person name="Nelson J."/>
            <person name="Spieth J."/>
            <person name="Ryan E."/>
            <person name="Andrews S."/>
            <person name="Geisel C."/>
            <person name="Layman D."/>
            <person name="Du H."/>
            <person name="Ali J."/>
            <person name="Berghoff A."/>
            <person name="Jones K."/>
            <person name="Drone K."/>
            <person name="Cotton M."/>
            <person name="Joshu C."/>
            <person name="Antonoiu B."/>
            <person name="Zidanic M."/>
            <person name="Strong C."/>
            <person name="Sun H."/>
            <person name="Lamar B."/>
            <person name="Yordan C."/>
            <person name="Ma P."/>
            <person name="Zhong J."/>
            <person name="Preston R."/>
            <person name="Vil D."/>
            <person name="Shekher M."/>
            <person name="Matero A."/>
            <person name="Shah R."/>
            <person name="Swaby I.K."/>
            <person name="O'Shaughnessy A."/>
            <person name="Rodriguez M."/>
            <person name="Hoffman J."/>
            <person name="Till S."/>
            <person name="Granat S."/>
            <person name="Shohdy N."/>
            <person name="Hasegawa A."/>
            <person name="Hameed A."/>
            <person name="Lodhi M."/>
            <person name="Johnson A."/>
            <person name="Chen E."/>
            <person name="Marra M.A."/>
            <person name="Martienssen R."/>
            <person name="McCombie W.R."/>
        </authorList>
    </citation>
    <scope>NUCLEOTIDE SEQUENCE [LARGE SCALE GENOMIC DNA]</scope>
    <source>
        <strain>cv. Columbia</strain>
    </source>
</reference>
<reference key="2">
    <citation type="journal article" date="2017" name="Plant J.">
        <title>Araport11: a complete reannotation of the Arabidopsis thaliana reference genome.</title>
        <authorList>
            <person name="Cheng C.Y."/>
            <person name="Krishnakumar V."/>
            <person name="Chan A.P."/>
            <person name="Thibaud-Nissen F."/>
            <person name="Schobel S."/>
            <person name="Town C.D."/>
        </authorList>
    </citation>
    <scope>GENOME REANNOTATION</scope>
    <source>
        <strain>cv. Columbia</strain>
    </source>
</reference>
<reference key="3">
    <citation type="journal article" date="2006" name="Plant Biotechnol. J.">
        <title>Simultaneous high-throughput recombinational cloning of open reading frames in closed and open configurations.</title>
        <authorList>
            <person name="Underwood B.A."/>
            <person name="Vanderhaeghen R."/>
            <person name="Whitford R."/>
            <person name="Town C.D."/>
            <person name="Hilson P."/>
        </authorList>
    </citation>
    <scope>NUCLEOTIDE SEQUENCE [LARGE SCALE MRNA]</scope>
    <source>
        <strain>cv. Columbia</strain>
    </source>
</reference>
<reference key="4">
    <citation type="journal article" date="2003" name="Nucleic Acids Res.">
        <title>Ten members of the Arabidopsis gene family encoding methyl-CpG-binding domain proteins are transcriptionally active and at least one, AtMBD11, is crucial for normal development.</title>
        <authorList>
            <person name="Berg A."/>
            <person name="Meza T.J."/>
            <person name="Mahic M."/>
            <person name="Thorstensen T."/>
            <person name="Kristiansen K."/>
            <person name="Aalen R.B."/>
        </authorList>
    </citation>
    <scope>GENE FAMILY</scope>
    <scope>NOMENCLATURE</scope>
</reference>
<reference key="5">
    <citation type="journal article" date="2005" name="Plant Physiol.">
        <title>Evolutionary divergence of monocot and dicot methyl-CpG-binding domain proteins.</title>
        <authorList>
            <person name="Springer N.M."/>
            <person name="Kaeppler S.M."/>
        </authorList>
    </citation>
    <scope>GENE FAMILY</scope>
</reference>
<reference key="6">
    <citation type="journal article" date="2007" name="Trends Plant Sci.">
        <title>Methyl-CpG-binding domain proteins in plants: interpreters of DNA methylation.</title>
        <authorList>
            <person name="Zemach A."/>
            <person name="Grafi G."/>
        </authorList>
    </citation>
    <scope>REVIEW</scope>
</reference>
<protein>
    <recommendedName>
        <fullName>Methyl-CpG-binding domain-containing protein 3</fullName>
        <shortName>AtMBD3</shortName>
        <shortName>MBD03</shortName>
    </recommendedName>
    <alternativeName>
        <fullName>Methyl-CpG-binding protein MBD3</fullName>
    </alternativeName>
</protein>
<name>MBD3_ARATH</name>
<evidence type="ECO:0000250" key="1"/>
<evidence type="ECO:0000255" key="2">
    <source>
        <dbReference type="PROSITE-ProRule" id="PRU00338"/>
    </source>
</evidence>
<evidence type="ECO:0000256" key="3">
    <source>
        <dbReference type="SAM" id="MobiDB-lite"/>
    </source>
</evidence>
<feature type="chain" id="PRO_0000405279" description="Methyl-CpG-binding domain-containing protein 3">
    <location>
        <begin position="1"/>
        <end position="163"/>
    </location>
</feature>
<feature type="domain" description="MBD" evidence="2">
    <location>
        <begin position="65"/>
        <end position="137"/>
    </location>
</feature>
<feature type="zinc finger region" description="CW-type">
    <location>
        <begin position="6"/>
        <end position="56"/>
    </location>
</feature>
<feature type="region of interest" description="Disordered" evidence="3">
    <location>
        <begin position="140"/>
        <end position="163"/>
    </location>
</feature>
<feature type="compositionally biased region" description="Basic and acidic residues" evidence="3">
    <location>
        <begin position="153"/>
        <end position="163"/>
    </location>
</feature>
<keyword id="KW-0238">DNA-binding</keyword>
<keyword id="KW-0479">Metal-binding</keyword>
<keyword id="KW-0539">Nucleus</keyword>
<keyword id="KW-1185">Reference proteome</keyword>
<keyword id="KW-0804">Transcription</keyword>
<keyword id="KW-0805">Transcription regulation</keyword>
<keyword id="KW-0862">Zinc</keyword>
<keyword id="KW-0863">Zinc-finger</keyword>